<organism>
    <name type="scientific">Halobacterium salinarum (strain ATCC 29341 / DSM 671 / R1)</name>
    <dbReference type="NCBI Taxonomy" id="478009"/>
    <lineage>
        <taxon>Archaea</taxon>
        <taxon>Methanobacteriati</taxon>
        <taxon>Methanobacteriota</taxon>
        <taxon>Stenosarchaea group</taxon>
        <taxon>Halobacteria</taxon>
        <taxon>Halobacteriales</taxon>
        <taxon>Halobacteriaceae</taxon>
        <taxon>Halobacterium</taxon>
        <taxon>Halobacterium salinarum NRC-34001</taxon>
    </lineage>
</organism>
<keyword id="KW-0056">Arginine metabolism</keyword>
<keyword id="KW-0238">DNA-binding</keyword>
<keyword id="KW-0614">Plasmid</keyword>
<keyword id="KW-0804">Transcription</keyword>
<keyword id="KW-0805">Transcription regulation</keyword>
<gene>
    <name type="primary">arcR</name>
    <name type="ordered locus">OE_5209R</name>
</gene>
<geneLocation type="plasmid">
    <name>PHS3</name>
</geneLocation>
<dbReference type="EMBL" id="AM774418">
    <property type="protein sequence ID" value="CAP15557.1"/>
    <property type="molecule type" value="Genomic_DNA"/>
</dbReference>
<dbReference type="EMBL" id="X80931">
    <property type="protein sequence ID" value="CAA56903.1"/>
    <property type="molecule type" value="Genomic_DNA"/>
</dbReference>
<dbReference type="PIR" id="T44862">
    <property type="entry name" value="T44862"/>
</dbReference>
<dbReference type="RefSeq" id="WP_010904162.1">
    <property type="nucleotide sequence ID" value="NC_010368.1"/>
</dbReference>
<dbReference type="SMR" id="B0R9X6"/>
<dbReference type="EnsemblBacteria" id="CAP15557">
    <property type="protein sequence ID" value="CAP15557"/>
    <property type="gene ID" value="OE_5209R"/>
</dbReference>
<dbReference type="KEGG" id="hsl:OE_5209R"/>
<dbReference type="HOGENOM" id="CLU_062618_6_1_2"/>
<dbReference type="PhylomeDB" id="B0R9X6"/>
<dbReference type="Proteomes" id="UP000001321">
    <property type="component" value="Plasmid PHS3"/>
</dbReference>
<dbReference type="GO" id="GO:0003677">
    <property type="term" value="F:DNA binding"/>
    <property type="evidence" value="ECO:0007669"/>
    <property type="project" value="UniProtKB-KW"/>
</dbReference>
<dbReference type="GO" id="GO:0003700">
    <property type="term" value="F:DNA-binding transcription factor activity"/>
    <property type="evidence" value="ECO:0007669"/>
    <property type="project" value="TreeGrafter"/>
</dbReference>
<dbReference type="GO" id="GO:0006525">
    <property type="term" value="P:arginine metabolic process"/>
    <property type="evidence" value="ECO:0007669"/>
    <property type="project" value="UniProtKB-KW"/>
</dbReference>
<dbReference type="GO" id="GO:0045892">
    <property type="term" value="P:negative regulation of DNA-templated transcription"/>
    <property type="evidence" value="ECO:0007669"/>
    <property type="project" value="TreeGrafter"/>
</dbReference>
<dbReference type="Gene3D" id="3.30.450.40">
    <property type="match status" value="1"/>
</dbReference>
<dbReference type="Gene3D" id="1.10.10.10">
    <property type="entry name" value="Winged helix-like DNA-binding domain superfamily/Winged helix DNA-binding domain"/>
    <property type="match status" value="1"/>
</dbReference>
<dbReference type="InterPro" id="IPR029016">
    <property type="entry name" value="GAF-like_dom_sf"/>
</dbReference>
<dbReference type="InterPro" id="IPR050707">
    <property type="entry name" value="HTH_MetabolicPath_Reg"/>
</dbReference>
<dbReference type="InterPro" id="IPR014757">
    <property type="entry name" value="Tscrpt_reg_IclR_C"/>
</dbReference>
<dbReference type="InterPro" id="IPR005471">
    <property type="entry name" value="Tscrpt_reg_IclR_N"/>
</dbReference>
<dbReference type="InterPro" id="IPR036388">
    <property type="entry name" value="WH-like_DNA-bd_sf"/>
</dbReference>
<dbReference type="InterPro" id="IPR036390">
    <property type="entry name" value="WH_DNA-bd_sf"/>
</dbReference>
<dbReference type="PANTHER" id="PTHR30136">
    <property type="entry name" value="HELIX-TURN-HELIX TRANSCRIPTIONAL REGULATOR, ICLR FAMILY"/>
    <property type="match status" value="1"/>
</dbReference>
<dbReference type="PANTHER" id="PTHR30136:SF35">
    <property type="entry name" value="HTH-TYPE TRANSCRIPTIONAL REGULATOR RV1719"/>
    <property type="match status" value="1"/>
</dbReference>
<dbReference type="Pfam" id="PF09339">
    <property type="entry name" value="HTH_IclR"/>
    <property type="match status" value="1"/>
</dbReference>
<dbReference type="Pfam" id="PF01614">
    <property type="entry name" value="IclR_C"/>
    <property type="match status" value="1"/>
</dbReference>
<dbReference type="SMART" id="SM00346">
    <property type="entry name" value="HTH_ICLR"/>
    <property type="match status" value="1"/>
</dbReference>
<dbReference type="SUPFAM" id="SSF55781">
    <property type="entry name" value="GAF domain-like"/>
    <property type="match status" value="1"/>
</dbReference>
<dbReference type="SUPFAM" id="SSF46785">
    <property type="entry name" value="Winged helix' DNA-binding domain"/>
    <property type="match status" value="1"/>
</dbReference>
<dbReference type="PROSITE" id="PS51077">
    <property type="entry name" value="HTH_ICLR"/>
    <property type="match status" value="1"/>
</dbReference>
<dbReference type="PROSITE" id="PS51078">
    <property type="entry name" value="ICLR_ED"/>
    <property type="match status" value="1"/>
</dbReference>
<evidence type="ECO:0000255" key="1">
    <source>
        <dbReference type="PROSITE-ProRule" id="PRU00393"/>
    </source>
</evidence>
<evidence type="ECO:0000255" key="2">
    <source>
        <dbReference type="PROSITE-ProRule" id="PRU00394"/>
    </source>
</evidence>
<evidence type="ECO:0000269" key="3">
    <source>
    </source>
</evidence>
<evidence type="ECO:0000305" key="4"/>
<sequence length="263" mass="29054">MDPEAANNGEPRRITSVLNAVEIIDAIKEHRGITLQELTTELDLTKATIHTYMATLRQVGIVEQDGDGTYQLGDWFVPVSNYARNSTDLYRLGREEIDKLATQTRHTAHLVTESDGRQIVLYESMGEESVTTEYHLRMRETPRKLHTSAAGKSILAFLPEGRRETLISEIEFGTESSTPIGSPDALREQLATVRDQGYAINDEEEIHGIRSIGAPIRGRTEDVAGAVSVTAPKTRLQNAEFAGEVPALVMEAANIIEVRLETA</sequence>
<accession>B0R9X6</accession>
<accession>Q48293</accession>
<comment type="function">
    <text evidence="3">Probably regulates transcription of the arcABC operon.</text>
</comment>
<comment type="induction">
    <text evidence="3">No induction in fermentatively grown cells.</text>
</comment>
<feature type="chain" id="PRO_0000428926" description="Probable HTH-type transcriptional regulator ArcR">
    <location>
        <begin position="1"/>
        <end position="263"/>
    </location>
</feature>
<feature type="domain" description="HTH iclR-type" evidence="1">
    <location>
        <begin position="14"/>
        <end position="74"/>
    </location>
</feature>
<feature type="domain" description="IclR-ED" evidence="2">
    <location>
        <begin position="89"/>
        <end position="262"/>
    </location>
</feature>
<feature type="DNA-binding region" description="H-T-H motif" evidence="1">
    <location>
        <begin position="35"/>
        <end position="54"/>
    </location>
</feature>
<feature type="sequence conflict" description="In Ref. 2; CAA56903." evidence="4" ref="2">
    <original>Y</original>
    <variation>M</variation>
    <location>
        <position position="70"/>
    </location>
</feature>
<reference key="1">
    <citation type="journal article" date="2008" name="Genomics">
        <title>Evolution in the laboratory: the genome of Halobacterium salinarum strain R1 compared to that of strain NRC-1.</title>
        <authorList>
            <person name="Pfeiffer F."/>
            <person name="Schuster S.C."/>
            <person name="Broicher A."/>
            <person name="Falb M."/>
            <person name="Palm P."/>
            <person name="Rodewald K."/>
            <person name="Ruepp A."/>
            <person name="Soppa J."/>
            <person name="Tittor J."/>
            <person name="Oesterhelt D."/>
        </authorList>
    </citation>
    <scope>NUCLEOTIDE SEQUENCE [LARGE SCALE GENOMIC DNA]</scope>
    <source>
        <strain>ATCC 29341 / DSM 671 / R1</strain>
        <plasmid>PHS3</plasmid>
    </source>
</reference>
<reference key="2">
    <citation type="journal article" date="1996" name="J. Bacteriol.">
        <title>Fermentative arginine degradation in Halobacterium salinarium (formerly Halobacterium halobium): genes, gene products, and transcripts of the arcRACB gene cluster.</title>
        <authorList>
            <person name="Ruepp A."/>
            <person name="Soppa J."/>
        </authorList>
    </citation>
    <scope>NUCLEOTIDE SEQUENCE [GENOMIC DNA] OF 70-263</scope>
    <scope>FUNCTION</scope>
    <scope>INDUCTION</scope>
    <source>
        <strain>R1 / S9 / L33</strain>
    </source>
</reference>
<name>ARCR_HALS3</name>
<protein>
    <recommendedName>
        <fullName>Probable HTH-type transcriptional regulator ArcR</fullName>
    </recommendedName>
</protein>
<proteinExistence type="evidence at transcript level"/>